<accession>Q5HGD9</accession>
<sequence length="514" mass="58931">MNEEQRKASSVDVLAERDKKAEKDYSKYFEHVYQPPNLKEAKKRGKQEVRYNRDFQIDEKYRGMGNERTFLIKTYGCQMNAHDTEVIAGILEALGYQATTDINTADVILINTCAIRENAENKVFSEIGNLKHLKKERPDILIGVCGCMSQEESVVNKILKSYQNVDMIFGTHNIHHLPEILEEAYLSKAMVVEVWSKEGDVIENLPKVREGNIKAWVNIMYGCDKFCTYCIVPFTRGKERSRRPEDIIDEVRELAREGYKEITLLGQNVNSYGKDLQDIEYDLGDLLQAISKIAIPRVRFTTSHPWDFTDHMIDVISEGGNIVPHIHLPVQSGNNAVLKIMGRKYTRESYLDLVKRIKDRIPNVALTTDIIVGYPNESEEQFEETLTLYDEVGFEHAYTYLYSQRDGTPAAKMKDNVPLNVKKERLQRLNKKVGHYSQIAMSKYEGQTVTVLCEGSSKKDDQVLAGYTDKNKLVNFKAPKEMIGKLVEVRIDEAKQYSLNGSFIKEVEPEMVIQ</sequence>
<comment type="function">
    <text evidence="1">Catalyzes the methylthiolation of N6-(dimethylallyl)adenosine (i(6)A), leading to the formation of 2-methylthio-N6-(dimethylallyl)adenosine (ms(2)i(6)A) at position 37 in tRNAs that read codons beginning with uridine.</text>
</comment>
<comment type="catalytic activity">
    <reaction evidence="1">
        <text>N(6)-dimethylallyladenosine(37) in tRNA + (sulfur carrier)-SH + AH2 + 2 S-adenosyl-L-methionine = 2-methylsulfanyl-N(6)-dimethylallyladenosine(37) in tRNA + (sulfur carrier)-H + 5'-deoxyadenosine + L-methionine + A + S-adenosyl-L-homocysteine + 2 H(+)</text>
        <dbReference type="Rhea" id="RHEA:37067"/>
        <dbReference type="Rhea" id="RHEA-COMP:10375"/>
        <dbReference type="Rhea" id="RHEA-COMP:10376"/>
        <dbReference type="Rhea" id="RHEA-COMP:14737"/>
        <dbReference type="Rhea" id="RHEA-COMP:14739"/>
        <dbReference type="ChEBI" id="CHEBI:13193"/>
        <dbReference type="ChEBI" id="CHEBI:15378"/>
        <dbReference type="ChEBI" id="CHEBI:17319"/>
        <dbReference type="ChEBI" id="CHEBI:17499"/>
        <dbReference type="ChEBI" id="CHEBI:29917"/>
        <dbReference type="ChEBI" id="CHEBI:57844"/>
        <dbReference type="ChEBI" id="CHEBI:57856"/>
        <dbReference type="ChEBI" id="CHEBI:59789"/>
        <dbReference type="ChEBI" id="CHEBI:64428"/>
        <dbReference type="ChEBI" id="CHEBI:74415"/>
        <dbReference type="ChEBI" id="CHEBI:74417"/>
        <dbReference type="EC" id="2.8.4.3"/>
    </reaction>
</comment>
<comment type="cofactor">
    <cofactor evidence="1">
        <name>[4Fe-4S] cluster</name>
        <dbReference type="ChEBI" id="CHEBI:49883"/>
    </cofactor>
    <text evidence="1">Binds 2 [4Fe-4S] clusters. One cluster is coordinated with 3 cysteines and an exchangeable S-adenosyl-L-methionine.</text>
</comment>
<comment type="subunit">
    <text evidence="1">Monomer.</text>
</comment>
<comment type="subcellular location">
    <subcellularLocation>
        <location evidence="1">Cytoplasm</location>
    </subcellularLocation>
</comment>
<comment type="similarity">
    <text evidence="1">Belongs to the methylthiotransferase family. MiaB subfamily.</text>
</comment>
<gene>
    <name evidence="1" type="primary">miaB</name>
    <name type="ordered locus">SACOL1312</name>
</gene>
<keyword id="KW-0004">4Fe-4S</keyword>
<keyword id="KW-0963">Cytoplasm</keyword>
<keyword id="KW-0408">Iron</keyword>
<keyword id="KW-0411">Iron-sulfur</keyword>
<keyword id="KW-0479">Metal-binding</keyword>
<keyword id="KW-0949">S-adenosyl-L-methionine</keyword>
<keyword id="KW-0808">Transferase</keyword>
<keyword id="KW-0819">tRNA processing</keyword>
<proteinExistence type="inferred from homology"/>
<feature type="chain" id="PRO_0000374565" description="tRNA-2-methylthio-N(6)-dimethylallyladenosine synthase">
    <location>
        <begin position="1"/>
        <end position="514"/>
    </location>
</feature>
<feature type="domain" description="MTTase N-terminal" evidence="1">
    <location>
        <begin position="68"/>
        <end position="186"/>
    </location>
</feature>
<feature type="domain" description="Radical SAM core" evidence="2">
    <location>
        <begin position="209"/>
        <end position="440"/>
    </location>
</feature>
<feature type="domain" description="TRAM" evidence="1">
    <location>
        <begin position="442"/>
        <end position="505"/>
    </location>
</feature>
<feature type="region of interest" description="Disordered" evidence="3">
    <location>
        <begin position="1"/>
        <end position="21"/>
    </location>
</feature>
<feature type="binding site" evidence="1">
    <location>
        <position position="77"/>
    </location>
    <ligand>
        <name>[4Fe-4S] cluster</name>
        <dbReference type="ChEBI" id="CHEBI:49883"/>
        <label>1</label>
    </ligand>
</feature>
<feature type="binding site" evidence="1">
    <location>
        <position position="113"/>
    </location>
    <ligand>
        <name>[4Fe-4S] cluster</name>
        <dbReference type="ChEBI" id="CHEBI:49883"/>
        <label>1</label>
    </ligand>
</feature>
<feature type="binding site" evidence="1">
    <location>
        <position position="147"/>
    </location>
    <ligand>
        <name>[4Fe-4S] cluster</name>
        <dbReference type="ChEBI" id="CHEBI:49883"/>
        <label>1</label>
    </ligand>
</feature>
<feature type="binding site" evidence="1">
    <location>
        <position position="223"/>
    </location>
    <ligand>
        <name>[4Fe-4S] cluster</name>
        <dbReference type="ChEBI" id="CHEBI:49883"/>
        <label>2</label>
        <note>4Fe-4S-S-AdoMet</note>
    </ligand>
</feature>
<feature type="binding site" evidence="1">
    <location>
        <position position="227"/>
    </location>
    <ligand>
        <name>[4Fe-4S] cluster</name>
        <dbReference type="ChEBI" id="CHEBI:49883"/>
        <label>2</label>
        <note>4Fe-4S-S-AdoMet</note>
    </ligand>
</feature>
<feature type="binding site" evidence="1">
    <location>
        <position position="230"/>
    </location>
    <ligand>
        <name>[4Fe-4S] cluster</name>
        <dbReference type="ChEBI" id="CHEBI:49883"/>
        <label>2</label>
        <note>4Fe-4S-S-AdoMet</note>
    </ligand>
</feature>
<organism>
    <name type="scientific">Staphylococcus aureus (strain COL)</name>
    <dbReference type="NCBI Taxonomy" id="93062"/>
    <lineage>
        <taxon>Bacteria</taxon>
        <taxon>Bacillati</taxon>
        <taxon>Bacillota</taxon>
        <taxon>Bacilli</taxon>
        <taxon>Bacillales</taxon>
        <taxon>Staphylococcaceae</taxon>
        <taxon>Staphylococcus</taxon>
    </lineage>
</organism>
<name>MIAB_STAAC</name>
<evidence type="ECO:0000255" key="1">
    <source>
        <dbReference type="HAMAP-Rule" id="MF_01864"/>
    </source>
</evidence>
<evidence type="ECO:0000255" key="2">
    <source>
        <dbReference type="PROSITE-ProRule" id="PRU01266"/>
    </source>
</evidence>
<evidence type="ECO:0000256" key="3">
    <source>
        <dbReference type="SAM" id="MobiDB-lite"/>
    </source>
</evidence>
<reference key="1">
    <citation type="journal article" date="2005" name="J. Bacteriol.">
        <title>Insights on evolution of virulence and resistance from the complete genome analysis of an early methicillin-resistant Staphylococcus aureus strain and a biofilm-producing methicillin-resistant Staphylococcus epidermidis strain.</title>
        <authorList>
            <person name="Gill S.R."/>
            <person name="Fouts D.E."/>
            <person name="Archer G.L."/>
            <person name="Mongodin E.F."/>
            <person name="DeBoy R.T."/>
            <person name="Ravel J."/>
            <person name="Paulsen I.T."/>
            <person name="Kolonay J.F."/>
            <person name="Brinkac L.M."/>
            <person name="Beanan M.J."/>
            <person name="Dodson R.J."/>
            <person name="Daugherty S.C."/>
            <person name="Madupu R."/>
            <person name="Angiuoli S.V."/>
            <person name="Durkin A.S."/>
            <person name="Haft D.H."/>
            <person name="Vamathevan J.J."/>
            <person name="Khouri H."/>
            <person name="Utterback T.R."/>
            <person name="Lee C."/>
            <person name="Dimitrov G."/>
            <person name="Jiang L."/>
            <person name="Qin H."/>
            <person name="Weidman J."/>
            <person name="Tran K."/>
            <person name="Kang K.H."/>
            <person name="Hance I.R."/>
            <person name="Nelson K.E."/>
            <person name="Fraser C.M."/>
        </authorList>
    </citation>
    <scope>NUCLEOTIDE SEQUENCE [LARGE SCALE GENOMIC DNA]</scope>
    <source>
        <strain>COL</strain>
    </source>
</reference>
<dbReference type="EC" id="2.8.4.3" evidence="1"/>
<dbReference type="EMBL" id="CP000046">
    <property type="protein sequence ID" value="AAW38142.1"/>
    <property type="molecule type" value="Genomic_DNA"/>
</dbReference>
<dbReference type="RefSeq" id="WP_001001523.1">
    <property type="nucleotide sequence ID" value="NZ_JBGOFO010000002.1"/>
</dbReference>
<dbReference type="SMR" id="Q5HGD9"/>
<dbReference type="KEGG" id="sac:SACOL1312"/>
<dbReference type="HOGENOM" id="CLU_018697_2_0_9"/>
<dbReference type="Proteomes" id="UP000000530">
    <property type="component" value="Chromosome"/>
</dbReference>
<dbReference type="GO" id="GO:0005829">
    <property type="term" value="C:cytosol"/>
    <property type="evidence" value="ECO:0007669"/>
    <property type="project" value="TreeGrafter"/>
</dbReference>
<dbReference type="GO" id="GO:0051539">
    <property type="term" value="F:4 iron, 4 sulfur cluster binding"/>
    <property type="evidence" value="ECO:0007669"/>
    <property type="project" value="UniProtKB-UniRule"/>
</dbReference>
<dbReference type="GO" id="GO:0046872">
    <property type="term" value="F:metal ion binding"/>
    <property type="evidence" value="ECO:0007669"/>
    <property type="project" value="UniProtKB-KW"/>
</dbReference>
<dbReference type="GO" id="GO:0035597">
    <property type="term" value="F:N6-isopentenyladenosine methylthiotransferase activity"/>
    <property type="evidence" value="ECO:0007669"/>
    <property type="project" value="TreeGrafter"/>
</dbReference>
<dbReference type="CDD" id="cd01335">
    <property type="entry name" value="Radical_SAM"/>
    <property type="match status" value="1"/>
</dbReference>
<dbReference type="FunFam" id="3.40.50.12160:FF:000006">
    <property type="entry name" value="tRNA-2-methylthio-N(6)-dimethylallyladenosine synthase"/>
    <property type="match status" value="1"/>
</dbReference>
<dbReference type="FunFam" id="3.80.30.20:FF:000001">
    <property type="entry name" value="tRNA-2-methylthio-N(6)-dimethylallyladenosine synthase 2"/>
    <property type="match status" value="1"/>
</dbReference>
<dbReference type="Gene3D" id="3.40.50.12160">
    <property type="entry name" value="Methylthiotransferase, N-terminal domain"/>
    <property type="match status" value="1"/>
</dbReference>
<dbReference type="Gene3D" id="3.80.30.20">
    <property type="entry name" value="tm_1862 like domain"/>
    <property type="match status" value="1"/>
</dbReference>
<dbReference type="HAMAP" id="MF_01864">
    <property type="entry name" value="tRNA_metthiotr_MiaB"/>
    <property type="match status" value="1"/>
</dbReference>
<dbReference type="InterPro" id="IPR006638">
    <property type="entry name" value="Elp3/MiaA/NifB-like_rSAM"/>
</dbReference>
<dbReference type="InterPro" id="IPR005839">
    <property type="entry name" value="Methylthiotransferase"/>
</dbReference>
<dbReference type="InterPro" id="IPR020612">
    <property type="entry name" value="Methylthiotransferase_CS"/>
</dbReference>
<dbReference type="InterPro" id="IPR013848">
    <property type="entry name" value="Methylthiotransferase_N"/>
</dbReference>
<dbReference type="InterPro" id="IPR038135">
    <property type="entry name" value="Methylthiotransferase_N_sf"/>
</dbReference>
<dbReference type="InterPro" id="IPR006463">
    <property type="entry name" value="MiaB_methiolase"/>
</dbReference>
<dbReference type="InterPro" id="IPR007197">
    <property type="entry name" value="rSAM"/>
</dbReference>
<dbReference type="InterPro" id="IPR023404">
    <property type="entry name" value="rSAM_horseshoe"/>
</dbReference>
<dbReference type="InterPro" id="IPR002792">
    <property type="entry name" value="TRAM_dom"/>
</dbReference>
<dbReference type="NCBIfam" id="TIGR01574">
    <property type="entry name" value="miaB-methiolase"/>
    <property type="match status" value="1"/>
</dbReference>
<dbReference type="NCBIfam" id="TIGR00089">
    <property type="entry name" value="MiaB/RimO family radical SAM methylthiotransferase"/>
    <property type="match status" value="1"/>
</dbReference>
<dbReference type="PANTHER" id="PTHR43020">
    <property type="entry name" value="CDK5 REGULATORY SUBUNIT-ASSOCIATED PROTEIN 1"/>
    <property type="match status" value="1"/>
</dbReference>
<dbReference type="PANTHER" id="PTHR43020:SF2">
    <property type="entry name" value="MITOCHONDRIAL TRNA METHYLTHIOTRANSFERASE CDK5RAP1"/>
    <property type="match status" value="1"/>
</dbReference>
<dbReference type="Pfam" id="PF04055">
    <property type="entry name" value="Radical_SAM"/>
    <property type="match status" value="1"/>
</dbReference>
<dbReference type="Pfam" id="PF01938">
    <property type="entry name" value="TRAM"/>
    <property type="match status" value="1"/>
</dbReference>
<dbReference type="Pfam" id="PF00919">
    <property type="entry name" value="UPF0004"/>
    <property type="match status" value="1"/>
</dbReference>
<dbReference type="SFLD" id="SFLDF00273">
    <property type="entry name" value="(dimethylallyl)adenosine_tRNA"/>
    <property type="match status" value="1"/>
</dbReference>
<dbReference type="SFLD" id="SFLDG01082">
    <property type="entry name" value="B12-binding_domain_containing"/>
    <property type="match status" value="1"/>
</dbReference>
<dbReference type="SFLD" id="SFLDS00029">
    <property type="entry name" value="Radical_SAM"/>
    <property type="match status" value="1"/>
</dbReference>
<dbReference type="SMART" id="SM00729">
    <property type="entry name" value="Elp3"/>
    <property type="match status" value="1"/>
</dbReference>
<dbReference type="SUPFAM" id="SSF102114">
    <property type="entry name" value="Radical SAM enzymes"/>
    <property type="match status" value="1"/>
</dbReference>
<dbReference type="PROSITE" id="PS51449">
    <property type="entry name" value="MTTASE_N"/>
    <property type="match status" value="1"/>
</dbReference>
<dbReference type="PROSITE" id="PS01278">
    <property type="entry name" value="MTTASE_RADICAL"/>
    <property type="match status" value="1"/>
</dbReference>
<dbReference type="PROSITE" id="PS51918">
    <property type="entry name" value="RADICAL_SAM"/>
    <property type="match status" value="1"/>
</dbReference>
<dbReference type="PROSITE" id="PS50926">
    <property type="entry name" value="TRAM"/>
    <property type="match status" value="1"/>
</dbReference>
<protein>
    <recommendedName>
        <fullName evidence="1">tRNA-2-methylthio-N(6)-dimethylallyladenosine synthase</fullName>
        <ecNumber evidence="1">2.8.4.3</ecNumber>
    </recommendedName>
    <alternativeName>
        <fullName evidence="1">(Dimethylallyl)adenosine tRNA methylthiotransferase MiaB</fullName>
    </alternativeName>
    <alternativeName>
        <fullName evidence="1">tRNA-i(6)A37 methylthiotransferase</fullName>
    </alternativeName>
</protein>